<dbReference type="EC" id="5.1.-.-"/>
<dbReference type="EMBL" id="AF480435">
    <property type="protein sequence ID" value="AAN32895.1"/>
    <property type="status" value="ALT_INIT"/>
    <property type="molecule type" value="mRNA"/>
</dbReference>
<dbReference type="EMBL" id="AC110597">
    <property type="status" value="NOT_ANNOTATED_CDS"/>
    <property type="molecule type" value="Genomic_DNA"/>
</dbReference>
<dbReference type="EMBL" id="BC062557">
    <property type="protein sequence ID" value="AAH62557.1"/>
    <property type="status" value="ALT_TERM"/>
    <property type="molecule type" value="mRNA"/>
</dbReference>
<dbReference type="EMBL" id="BC117325">
    <property type="protein sequence ID" value="AAI17326.1"/>
    <property type="status" value="ALT_INIT"/>
    <property type="molecule type" value="mRNA"/>
</dbReference>
<dbReference type="CCDS" id="CCDS11995.2"/>
<dbReference type="RefSeq" id="NP_115536.2">
    <property type="nucleotide sequence ID" value="NM_032160.3"/>
</dbReference>
<dbReference type="SMR" id="Q8IZU8"/>
<dbReference type="BioGRID" id="124911">
    <property type="interactions" value="5"/>
</dbReference>
<dbReference type="FunCoup" id="Q8IZU8">
    <property type="interactions" value="197"/>
</dbReference>
<dbReference type="IntAct" id="Q8IZU8">
    <property type="interactions" value="1"/>
</dbReference>
<dbReference type="STRING" id="9606.ENSP00000310565"/>
<dbReference type="GlyCosmos" id="Q8IZU8">
    <property type="glycosylation" value="5 sites, No reported glycans"/>
</dbReference>
<dbReference type="GlyGen" id="Q8IZU8">
    <property type="glycosylation" value="8 sites, 1 O-linked glycan (3 sites)"/>
</dbReference>
<dbReference type="iPTMnet" id="Q8IZU8"/>
<dbReference type="PhosphoSitePlus" id="Q8IZU8"/>
<dbReference type="BioMuta" id="DSEL"/>
<dbReference type="DMDM" id="126215700"/>
<dbReference type="jPOST" id="Q8IZU8"/>
<dbReference type="MassIVE" id="Q8IZU8"/>
<dbReference type="PaxDb" id="9606-ENSP00000310565"/>
<dbReference type="PeptideAtlas" id="Q8IZU8"/>
<dbReference type="ProteomicsDB" id="71432"/>
<dbReference type="Antibodypedia" id="77494">
    <property type="antibodies" value="5 antibodies from 5 providers"/>
</dbReference>
<dbReference type="DNASU" id="92126"/>
<dbReference type="Ensembl" id="ENST00000310045.9">
    <property type="protein sequence ID" value="ENSP00000310565.8"/>
    <property type="gene ID" value="ENSG00000171451.15"/>
</dbReference>
<dbReference type="Ensembl" id="ENST00000572659.1">
    <property type="protein sequence ID" value="ENSP00000460321.1"/>
    <property type="gene ID" value="ENSG00000262102.1"/>
</dbReference>
<dbReference type="GeneID" id="92126"/>
<dbReference type="KEGG" id="hsa:92126"/>
<dbReference type="MANE-Select" id="ENST00000310045.9">
    <property type="protein sequence ID" value="ENSP00000310565.8"/>
    <property type="RefSeq nucleotide sequence ID" value="NM_032160.3"/>
    <property type="RefSeq protein sequence ID" value="NP_115536.2"/>
</dbReference>
<dbReference type="UCSC" id="uc002lke.2">
    <property type="organism name" value="human"/>
</dbReference>
<dbReference type="AGR" id="HGNC:18144"/>
<dbReference type="CTD" id="92126"/>
<dbReference type="DisGeNET" id="92126"/>
<dbReference type="GeneCards" id="DSEL"/>
<dbReference type="HGNC" id="HGNC:18144">
    <property type="gene designation" value="DSEL"/>
</dbReference>
<dbReference type="HPA" id="ENSG00000171451">
    <property type="expression patterns" value="Low tissue specificity"/>
</dbReference>
<dbReference type="MIM" id="611125">
    <property type="type" value="gene"/>
</dbReference>
<dbReference type="neXtProt" id="NX_Q8IZU8"/>
<dbReference type="OpenTargets" id="ENSG00000171451"/>
<dbReference type="PharmGKB" id="PA162384097"/>
<dbReference type="VEuPathDB" id="HostDB:ENSG00000171451"/>
<dbReference type="eggNOG" id="ENOG502QPWZ">
    <property type="taxonomic scope" value="Eukaryota"/>
</dbReference>
<dbReference type="GeneTree" id="ENSGT00390000006522"/>
<dbReference type="HOGENOM" id="CLU_011348_0_0_1"/>
<dbReference type="InParanoid" id="Q8IZU8"/>
<dbReference type="OrthoDB" id="5946629at2759"/>
<dbReference type="PAN-GO" id="Q8IZU8">
    <property type="GO annotations" value="3 GO annotations based on evolutionary models"/>
</dbReference>
<dbReference type="PhylomeDB" id="Q8IZU8"/>
<dbReference type="TreeFam" id="TF334118"/>
<dbReference type="BRENDA" id="5.1.3.19">
    <property type="organism ID" value="2681"/>
</dbReference>
<dbReference type="PathwayCommons" id="Q8IZU8"/>
<dbReference type="Reactome" id="R-HSA-2022923">
    <property type="pathway name" value="Dermatan sulfate biosynthesis"/>
</dbReference>
<dbReference type="SignaLink" id="Q8IZU8"/>
<dbReference type="BioGRID-ORCS" id="92126">
    <property type="hits" value="26 hits in 1135 CRISPR screens"/>
</dbReference>
<dbReference type="GenomeRNAi" id="92126"/>
<dbReference type="Pharos" id="Q8IZU8">
    <property type="development level" value="Tdark"/>
</dbReference>
<dbReference type="PRO" id="PR:Q8IZU8"/>
<dbReference type="Proteomes" id="UP000005640">
    <property type="component" value="Chromosome 18"/>
</dbReference>
<dbReference type="RNAct" id="Q8IZU8">
    <property type="molecule type" value="protein"/>
</dbReference>
<dbReference type="Bgee" id="ENSG00000171451">
    <property type="expression patterns" value="Expressed in stromal cell of endometrium and 102 other cell types or tissues"/>
</dbReference>
<dbReference type="GO" id="GO:0000139">
    <property type="term" value="C:Golgi membrane"/>
    <property type="evidence" value="ECO:0000304"/>
    <property type="project" value="Reactome"/>
</dbReference>
<dbReference type="GO" id="GO:0047757">
    <property type="term" value="F:chondroitin-glucuronate 5-epimerase activity"/>
    <property type="evidence" value="ECO:0000318"/>
    <property type="project" value="GO_Central"/>
</dbReference>
<dbReference type="GO" id="GO:0008146">
    <property type="term" value="F:sulfotransferase activity"/>
    <property type="evidence" value="ECO:0007669"/>
    <property type="project" value="InterPro"/>
</dbReference>
<dbReference type="FunFam" id="1.50.10.100:FF:000001">
    <property type="entry name" value="dermatan-sulfate epimerase isoform X1"/>
    <property type="match status" value="1"/>
</dbReference>
<dbReference type="FunFam" id="2.70.98.70:FF:000001">
    <property type="entry name" value="dermatan-sulfate epimerase isoform X1"/>
    <property type="match status" value="1"/>
</dbReference>
<dbReference type="Gene3D" id="2.70.98.70">
    <property type="match status" value="1"/>
</dbReference>
<dbReference type="Gene3D" id="1.50.10.100">
    <property type="entry name" value="Chondroitin AC/alginate lyase"/>
    <property type="match status" value="1"/>
</dbReference>
<dbReference type="Gene3D" id="3.40.50.300">
    <property type="entry name" value="P-loop containing nucleotide triphosphate hydrolases"/>
    <property type="match status" value="1"/>
</dbReference>
<dbReference type="InterPro" id="IPR008929">
    <property type="entry name" value="Chondroitin_lyas"/>
</dbReference>
<dbReference type="InterPro" id="IPR052447">
    <property type="entry name" value="Dermatan-Sulfate_Isomerase"/>
</dbReference>
<dbReference type="InterPro" id="IPR027417">
    <property type="entry name" value="P-loop_NTPase"/>
</dbReference>
<dbReference type="InterPro" id="IPR000863">
    <property type="entry name" value="Sulfotransferase_dom"/>
</dbReference>
<dbReference type="PANTHER" id="PTHR15532">
    <property type="match status" value="1"/>
</dbReference>
<dbReference type="PANTHER" id="PTHR15532:SF2">
    <property type="entry name" value="DERMATAN-SULFATE EPIMERASE-LIKE PROTEIN"/>
    <property type="match status" value="1"/>
</dbReference>
<dbReference type="Pfam" id="PF00685">
    <property type="entry name" value="Sulfotransfer_1"/>
    <property type="match status" value="1"/>
</dbReference>
<dbReference type="SUPFAM" id="SSF52540">
    <property type="entry name" value="P-loop containing nucleoside triphosphate hydrolases"/>
    <property type="match status" value="1"/>
</dbReference>
<keyword id="KW-0325">Glycoprotein</keyword>
<keyword id="KW-0413">Isomerase</keyword>
<keyword id="KW-0472">Membrane</keyword>
<keyword id="KW-1267">Proteomics identification</keyword>
<keyword id="KW-1185">Reference proteome</keyword>
<keyword id="KW-0732">Signal</keyword>
<keyword id="KW-0812">Transmembrane</keyword>
<keyword id="KW-1133">Transmembrane helix</keyword>
<comment type="subcellular location">
    <subcellularLocation>
        <location evidence="4">Membrane</location>
        <topology evidence="4">Multi-pass membrane protein</topology>
    </subcellularLocation>
</comment>
<comment type="tissue specificity">
    <text evidence="2">Expressed in different brain areas as well as in multiple other peripheral tissues.</text>
</comment>
<comment type="similarity">
    <text evidence="4">Belongs to the dermatan-sulfate isomerase family.</text>
</comment>
<comment type="sequence caution" evidence="4">
    <conflict type="erroneous initiation">
        <sequence resource="EMBL-CDS" id="AAI17326"/>
    </conflict>
</comment>
<comment type="sequence caution" evidence="4">
    <conflict type="erroneous initiation">
        <sequence resource="EMBL-CDS" id="AAN32895"/>
    </conflict>
</comment>
<accession>Q8IZU8</accession>
<accession>Q17RH1</accession>
<accession>Q6P5Z3</accession>
<gene>
    <name type="primary">DSEL</name>
    <name type="synonym">C18orf4</name>
    <name type="synonym">NCAG1</name>
</gene>
<evidence type="ECO:0000255" key="1"/>
<evidence type="ECO:0000269" key="2">
    <source>
    </source>
</evidence>
<evidence type="ECO:0000269" key="3">
    <source>
    </source>
</evidence>
<evidence type="ECO:0000305" key="4"/>
<protein>
    <recommendedName>
        <fullName>Dermatan-sulfate epimerase-like protein</fullName>
        <ecNumber>5.1.-.-</ecNumber>
    </recommendedName>
</protein>
<reference key="1">
    <citation type="journal article" date="2003" name="Mol. Psychiatry">
        <title>A novel CpG-associated brain-expressed candidate gene for chromosome 18q-linked bipolar disorder.</title>
        <authorList>
            <person name="Goossens D."/>
            <person name="Van Gestel S."/>
            <person name="Claes S."/>
            <person name="De Rijk P."/>
            <person name="Souery D."/>
            <person name="Massat I."/>
            <person name="Van den Bossche D."/>
            <person name="Backhovens H."/>
            <person name="Mendlewicz J."/>
            <person name="Van Broeckhoven C."/>
            <person name="Del-Favero J."/>
        </authorList>
    </citation>
    <scope>NUCLEOTIDE SEQUENCE [MRNA]</scope>
    <scope>TISSUE SPECIFICITY</scope>
</reference>
<reference key="2">
    <citation type="journal article" date="2005" name="Nature">
        <title>DNA sequence and analysis of human chromosome 18.</title>
        <authorList>
            <person name="Nusbaum C."/>
            <person name="Zody M.C."/>
            <person name="Borowsky M.L."/>
            <person name="Kamal M."/>
            <person name="Kodira C.D."/>
            <person name="Taylor T.D."/>
            <person name="Whittaker C.A."/>
            <person name="Chang J.L."/>
            <person name="Cuomo C.A."/>
            <person name="Dewar K."/>
            <person name="FitzGerald M.G."/>
            <person name="Yang X."/>
            <person name="Abouelleil A."/>
            <person name="Allen N.R."/>
            <person name="Anderson S."/>
            <person name="Bloom T."/>
            <person name="Bugalter B."/>
            <person name="Butler J."/>
            <person name="Cook A."/>
            <person name="DeCaprio D."/>
            <person name="Engels R."/>
            <person name="Garber M."/>
            <person name="Gnirke A."/>
            <person name="Hafez N."/>
            <person name="Hall J.L."/>
            <person name="Norman C.H."/>
            <person name="Itoh T."/>
            <person name="Jaffe D.B."/>
            <person name="Kuroki Y."/>
            <person name="Lehoczky J."/>
            <person name="Lui A."/>
            <person name="Macdonald P."/>
            <person name="Mauceli E."/>
            <person name="Mikkelsen T.S."/>
            <person name="Naylor J.W."/>
            <person name="Nicol R."/>
            <person name="Nguyen C."/>
            <person name="Noguchi H."/>
            <person name="O'Leary S.B."/>
            <person name="Piqani B."/>
            <person name="Smith C.L."/>
            <person name="Talamas J.A."/>
            <person name="Topham K."/>
            <person name="Totoki Y."/>
            <person name="Toyoda A."/>
            <person name="Wain H.M."/>
            <person name="Young S.K."/>
            <person name="Zeng Q."/>
            <person name="Zimmer A.R."/>
            <person name="Fujiyama A."/>
            <person name="Hattori M."/>
            <person name="Birren B.W."/>
            <person name="Sakaki Y."/>
            <person name="Lander E.S."/>
        </authorList>
    </citation>
    <scope>NUCLEOTIDE SEQUENCE [LARGE SCALE GENOMIC DNA]</scope>
</reference>
<reference key="3">
    <citation type="journal article" date="2004" name="Genome Res.">
        <title>The status, quality, and expansion of the NIH full-length cDNA project: the Mammalian Gene Collection (MGC).</title>
        <authorList>
            <consortium name="The MGC Project Team"/>
        </authorList>
    </citation>
    <scope>NUCLEOTIDE SEQUENCE [LARGE SCALE MRNA]</scope>
    <source>
        <tissue>Brain</tissue>
        <tissue>Mammary gland</tissue>
    </source>
</reference>
<reference key="4">
    <citation type="journal article" date="2006" name="Science">
        <title>The consensus coding sequences of human breast and colorectal cancers.</title>
        <authorList>
            <person name="Sjoeblom T."/>
            <person name="Jones S."/>
            <person name="Wood L.D."/>
            <person name="Parsons D.W."/>
            <person name="Lin J."/>
            <person name="Barber T.D."/>
            <person name="Mandelker D."/>
            <person name="Leary R.J."/>
            <person name="Ptak J."/>
            <person name="Silliman N."/>
            <person name="Szabo S."/>
            <person name="Buckhaults P."/>
            <person name="Farrell C."/>
            <person name="Meeh P."/>
            <person name="Markowitz S.D."/>
            <person name="Willis J."/>
            <person name="Dawson D."/>
            <person name="Willson J.K.V."/>
            <person name="Gazdar A.F."/>
            <person name="Hartigan J."/>
            <person name="Wu L."/>
            <person name="Liu C."/>
            <person name="Parmigiani G."/>
            <person name="Park B.H."/>
            <person name="Bachman K.E."/>
            <person name="Papadopoulos N."/>
            <person name="Vogelstein B."/>
            <person name="Kinzler K.W."/>
            <person name="Velculescu V.E."/>
        </authorList>
    </citation>
    <scope>VARIANT [LARGE SCALE ANALYSIS] GLU-1090</scope>
</reference>
<organism>
    <name type="scientific">Homo sapiens</name>
    <name type="common">Human</name>
    <dbReference type="NCBI Taxonomy" id="9606"/>
    <lineage>
        <taxon>Eukaryota</taxon>
        <taxon>Metazoa</taxon>
        <taxon>Chordata</taxon>
        <taxon>Craniata</taxon>
        <taxon>Vertebrata</taxon>
        <taxon>Euteleostomi</taxon>
        <taxon>Mammalia</taxon>
        <taxon>Eutheria</taxon>
        <taxon>Euarchontoglires</taxon>
        <taxon>Primates</taxon>
        <taxon>Haplorrhini</taxon>
        <taxon>Catarrhini</taxon>
        <taxon>Hominidae</taxon>
        <taxon>Homo</taxon>
    </lineage>
</organism>
<name>DSEL_HUMAN</name>
<feature type="signal peptide" evidence="1">
    <location>
        <begin position="1"/>
        <end position="20"/>
    </location>
</feature>
<feature type="chain" id="PRO_0000278288" description="Dermatan-sulfate epimerase-like protein">
    <location>
        <begin position="21"/>
        <end position="1212"/>
    </location>
</feature>
<feature type="transmembrane region" description="Helical" evidence="1">
    <location>
        <begin position="764"/>
        <end position="784"/>
    </location>
</feature>
<feature type="transmembrane region" description="Helical" evidence="1">
    <location>
        <begin position="803"/>
        <end position="823"/>
    </location>
</feature>
<feature type="glycosylation site" description="N-linked (GlcNAc...) asparagine" evidence="1">
    <location>
        <position position="28"/>
    </location>
</feature>
<feature type="glycosylation site" description="N-linked (GlcNAc...) asparagine" evidence="1">
    <location>
        <position position="666"/>
    </location>
</feature>
<feature type="glycosylation site" description="N-linked (GlcNAc...) asparagine" evidence="1">
    <location>
        <position position="688"/>
    </location>
</feature>
<feature type="glycosylation site" description="N-linked (GlcNAc...) asparagine" evidence="1">
    <location>
        <position position="709"/>
    </location>
</feature>
<feature type="glycosylation site" description="N-linked (GlcNAc...) asparagine" evidence="1">
    <location>
        <position position="874"/>
    </location>
</feature>
<feature type="sequence variant" id="VAR_030833" description="In dbSNP:rs2279269.">
    <original>P</original>
    <variation>S</variation>
    <location>
        <position position="673"/>
    </location>
</feature>
<feature type="sequence variant" id="VAR_030834" description="In dbSNP:rs12953840.">
    <original>Y</original>
    <variation>C</variation>
    <location>
        <position position="730"/>
    </location>
</feature>
<feature type="sequence variant" id="VAR_057759" description="In dbSNP:rs35479856.">
    <original>T</original>
    <variation>S</variation>
    <location>
        <position position="832"/>
    </location>
</feature>
<feature type="sequence variant" id="VAR_036528" description="In a colorectal cancer sample; somatic mutation." evidence="3">
    <original>K</original>
    <variation>E</variation>
    <location>
        <position position="1090"/>
    </location>
</feature>
<feature type="sequence conflict" description="In Ref. 3; AAI17326." evidence="4" ref="3">
    <location>
        <position position="188"/>
    </location>
</feature>
<proteinExistence type="evidence at protein level"/>
<sequence>MALMFTGHLLFLALLMFAFSTFEESVSNYSEWAVFTDDIDQFKTQKVQDFRPNQKLKKSMLHPSLYFDAGEIQAMRQKSRASHLHLFRAIRSAVTVMLSNPTYYLPPPKHADFAAKWNEIYGNNLPPLALYCLLCPEDKVAFEFVLEYMDRMVGYKDWLVENAPGDEVPIGHSLTGFATAFDFLYNLLDNHRRQKYLEKIWVITEEMYEYSKVRSWGKQLLHNHQATNMIALLTGALVTGVDKGSKANIWKQAVVDVMEKTMFLLNHIVDGSLDEGVAYGSYTAKSVTQYVFLAQRHFNINNLDNNWLKMHFWFYYATLLPGFQRTVGIADSNYNWFYGPESQLVFLDKFILKNGAGNWLAQQIRKHRPKDGPMVPSTAQRWSTLHTEYIWYDPQLTPQPPADYGTAKIHTFPNWGVVTYGAGLPNTQTNTFVSFKSGKLGGRAVYDIVHFQPYSWIDGWRSFNPGHEHPDQNSFTFAPNGQVFVSEALYGPKLSHLNNVLVFAPSPSSQCNKPWEGQLGECAQWLKWTGEEVGDAAGEIITASQHGEMVFVSGEAVSAYSSAMRLKSVYRALLLLNSQTLLVVDHIERQEDSPINSVSAFFHNLDIDFKYIPYKFMNRYNGAMMDVWDAHYKMFWFDHHGNSPMASIQEAEQAAEFKKRWTQFVNVTFQMEPTITRIAYVFYGPYINVSSCRFIDSSNPGLQISLNVNNTEHVVSIVTDYHNLKTRFNYLGFGGFASVADQGQITRFGLGTQAIVKPVRHDRIIFPFGFKFNIAVGLILCISLVILTFQWRFYLSFRKLMRWILILVIALWFIELLDVWSTCSQPICAKWTRTEAEGSKKSLSSEGHHMDLPDVVITSLPGSGAEILKQLFFNSSDFLYIRVPTAYIDIPETELEIDSFVDACEWKVSDIRSGHFRLLRGWLQSLVQDTKLHLQNIHLHEPNRGKLAQYFAMNKDKKRKFKRRESLPEQRSQMKGAFDRDAEYIRALRRHLVYYPSARPVLSLSSGSWTLKLHFFQEVLGASMRALYIVRDPRAWIYSMLYNSKPSLYSLKNVPEHLAKLFKIEGGKGKCNLNSGYAFEYEPLRKELSKSKSNAVSLLSHLWLANTAAALRINTDLLPTSYQLVKFEDIVHFPQKTTERIFAFLGIPLSPASLNQILFATSTNLFYLPYEGEISPTNTNVWKQNLPRDEIKLIENICWTLMDRLGYPKFMD</sequence>